<dbReference type="EMBL" id="X13383">
    <property type="protein sequence ID" value="CAA31760.1"/>
    <property type="molecule type" value="mRNA"/>
</dbReference>
<dbReference type="EMBL" id="U31669">
    <property type="protein sequence ID" value="AAA90954.1"/>
    <property type="molecule type" value="Genomic_DNA"/>
</dbReference>
<dbReference type="PIR" id="T06527">
    <property type="entry name" value="T06527"/>
</dbReference>
<dbReference type="SMR" id="P14710"/>
<dbReference type="EnsemblPlants" id="Psat1g157360.1">
    <property type="protein sequence ID" value="Psat1g157360.1.cds"/>
    <property type="gene ID" value="Psat1g157360"/>
</dbReference>
<dbReference type="Gramene" id="Psat1g157360.1">
    <property type="protein sequence ID" value="Psat1g157360.1.cds"/>
    <property type="gene ID" value="Psat1g157360"/>
</dbReference>
<dbReference type="OrthoDB" id="1858506at2759"/>
<dbReference type="GO" id="GO:0005737">
    <property type="term" value="C:cytoplasm"/>
    <property type="evidence" value="ECO:0007669"/>
    <property type="project" value="TreeGrafter"/>
</dbReference>
<dbReference type="GO" id="GO:0005634">
    <property type="term" value="C:nucleus"/>
    <property type="evidence" value="ECO:0007669"/>
    <property type="project" value="TreeGrafter"/>
</dbReference>
<dbReference type="GO" id="GO:0010427">
    <property type="term" value="F:abscisic acid binding"/>
    <property type="evidence" value="ECO:0007669"/>
    <property type="project" value="InterPro"/>
</dbReference>
<dbReference type="GO" id="GO:0004864">
    <property type="term" value="F:protein phosphatase inhibitor activity"/>
    <property type="evidence" value="ECO:0007669"/>
    <property type="project" value="InterPro"/>
</dbReference>
<dbReference type="GO" id="GO:0038023">
    <property type="term" value="F:signaling receptor activity"/>
    <property type="evidence" value="ECO:0007669"/>
    <property type="project" value="InterPro"/>
</dbReference>
<dbReference type="GO" id="GO:0009738">
    <property type="term" value="P:abscisic acid-activated signaling pathway"/>
    <property type="evidence" value="ECO:0007669"/>
    <property type="project" value="InterPro"/>
</dbReference>
<dbReference type="GO" id="GO:0006952">
    <property type="term" value="P:defense response"/>
    <property type="evidence" value="ECO:0007669"/>
    <property type="project" value="UniProtKB-KW"/>
</dbReference>
<dbReference type="CDD" id="cd07816">
    <property type="entry name" value="Bet_v1-like"/>
    <property type="match status" value="1"/>
</dbReference>
<dbReference type="FunFam" id="3.30.530.20:FF:000007">
    <property type="entry name" value="Major pollen allergen Bet v 1-A"/>
    <property type="match status" value="1"/>
</dbReference>
<dbReference type="Gene3D" id="3.30.530.20">
    <property type="match status" value="1"/>
</dbReference>
<dbReference type="InterPro" id="IPR000916">
    <property type="entry name" value="Bet_v_I/MLP"/>
</dbReference>
<dbReference type="InterPro" id="IPR024949">
    <property type="entry name" value="Bet_v_I_allergen"/>
</dbReference>
<dbReference type="InterPro" id="IPR050279">
    <property type="entry name" value="Plant_def-hormone_signal"/>
</dbReference>
<dbReference type="InterPro" id="IPR023393">
    <property type="entry name" value="START-like_dom_sf"/>
</dbReference>
<dbReference type="PANTHER" id="PTHR31213">
    <property type="entry name" value="OS08G0374000 PROTEIN-RELATED"/>
    <property type="match status" value="1"/>
</dbReference>
<dbReference type="PANTHER" id="PTHR31213:SF55">
    <property type="entry name" value="STRESS-INDUCED PROTEIN SAM22"/>
    <property type="match status" value="1"/>
</dbReference>
<dbReference type="Pfam" id="PF00407">
    <property type="entry name" value="Bet_v_1"/>
    <property type="match status" value="1"/>
</dbReference>
<dbReference type="PRINTS" id="PR00634">
    <property type="entry name" value="BETALLERGEN"/>
</dbReference>
<dbReference type="SUPFAM" id="SSF55961">
    <property type="entry name" value="Bet v1-like"/>
    <property type="match status" value="1"/>
</dbReference>
<dbReference type="PROSITE" id="PS00451">
    <property type="entry name" value="PATHOGENESIS_BETVI"/>
    <property type="match status" value="1"/>
</dbReference>
<proteinExistence type="evidence at transcript level"/>
<feature type="chain" id="PRO_0000154166" description="Disease resistance response protein Pi49">
    <location>
        <begin position="1"/>
        <end position="158"/>
    </location>
</feature>
<accession>P14710</accession>
<name>DRR3_PEA</name>
<protein>
    <recommendedName>
        <fullName>Disease resistance response protein Pi49</fullName>
    </recommendedName>
    <alternativeName>
        <fullName>PR10</fullName>
    </alternativeName>
</protein>
<sequence length="158" mass="16747">MGVFNVEDEITSVVAPAILYKALVTDADNLTPKVIDAIKSIEIVEGNGGAGTIKKLTFVEDGETKHVLHKVELVDVANLAYNYSIVGGVGFPDTVEKISFEAKLSAGPNGGSIAKLSVKYFTKGDAAPSEEQLKTDKAKGDGLFKALEGYCLAHPDYN</sequence>
<gene>
    <name type="primary">DRR49A</name>
</gene>
<keyword id="KW-0568">Pathogenesis-related protein</keyword>
<keyword id="KW-0611">Plant defense</keyword>
<evidence type="ECO:0000305" key="1"/>
<reference key="1">
    <citation type="journal article" date="1988" name="Plant Mol. Biol.">
        <title>cDNA sequences for pea disease resistance response genes.</title>
        <authorList>
            <person name="Fristensky B.W."/>
            <person name="Horovitz D."/>
            <person name="Hadwiger L.A."/>
        </authorList>
        <dbReference type="AGRICOLA" id="IND92000015"/>
    </citation>
    <scope>NUCLEOTIDE SEQUENCE [MRNA]</scope>
    <source>
        <strain>cv. Alaska</strain>
    </source>
</reference>
<reference key="2">
    <citation type="online journal article" date="1995" name="Plant Gene Register">
        <title>Cloning and sequencing of disease-resistance response gene DRR49a (Ypr10.PS.1; pI49) from Pisum sativum.</title>
        <authorList>
            <person name="Culley D.E."/>
            <person name="Brown S."/>
            <person name="Parsons M.A."/>
            <person name="Hadwiger L.A."/>
            <person name="Fristensky B.W."/>
        </authorList>
        <locator>PGR95-070</locator>
    </citation>
    <scope>NUCLEOTIDE SEQUENCE [GENOMIC DNA]</scope>
    <source>
        <strain>cv. Alcan</strain>
    </source>
</reference>
<organism>
    <name type="scientific">Pisum sativum</name>
    <name type="common">Garden pea</name>
    <name type="synonym">Lathyrus oleraceus</name>
    <dbReference type="NCBI Taxonomy" id="3888"/>
    <lineage>
        <taxon>Eukaryota</taxon>
        <taxon>Viridiplantae</taxon>
        <taxon>Streptophyta</taxon>
        <taxon>Embryophyta</taxon>
        <taxon>Tracheophyta</taxon>
        <taxon>Spermatophyta</taxon>
        <taxon>Magnoliopsida</taxon>
        <taxon>eudicotyledons</taxon>
        <taxon>Gunneridae</taxon>
        <taxon>Pentapetalae</taxon>
        <taxon>rosids</taxon>
        <taxon>fabids</taxon>
        <taxon>Fabales</taxon>
        <taxon>Fabaceae</taxon>
        <taxon>Papilionoideae</taxon>
        <taxon>50 kb inversion clade</taxon>
        <taxon>NPAAA clade</taxon>
        <taxon>Hologalegina</taxon>
        <taxon>IRL clade</taxon>
        <taxon>Fabeae</taxon>
        <taxon>Pisum</taxon>
    </lineage>
</organism>
<comment type="induction">
    <text>Upon contact with the plant pathogens fungus Fusarium solani, Pseudomonas syringae pv pisi, and the fungal elicitor chitosan.</text>
</comment>
<comment type="similarity">
    <text evidence="1">Belongs to the BetVI family.</text>
</comment>